<sequence>SAGLLTQEWSAVEDLLAQMSLPEADAQRDAEMVSTATGGGRMNQESIEPPNNLPPRERKAGCKNFYWKGFTSC</sequence>
<accession>P21780</accession>
<comment type="function">
    <text>Somatostatin inhibits the release of somatotropin.</text>
</comment>
<comment type="subcellular location">
    <subcellularLocation>
        <location>Secreted</location>
    </subcellularLocation>
</comment>
<comment type="similarity">
    <text evidence="3">Belongs to the somatostatin family.</text>
</comment>
<dbReference type="PIR" id="S00169">
    <property type="entry name" value="S00169"/>
</dbReference>
<dbReference type="GO" id="GO:0005615">
    <property type="term" value="C:extracellular space"/>
    <property type="evidence" value="ECO:0007669"/>
    <property type="project" value="TreeGrafter"/>
</dbReference>
<dbReference type="GO" id="GO:0005179">
    <property type="term" value="F:hormone activity"/>
    <property type="evidence" value="ECO:0007669"/>
    <property type="project" value="UniProtKB-KW"/>
</dbReference>
<dbReference type="GO" id="GO:0030334">
    <property type="term" value="P:regulation of cell migration"/>
    <property type="evidence" value="ECO:0007669"/>
    <property type="project" value="TreeGrafter"/>
</dbReference>
<dbReference type="InterPro" id="IPR004250">
    <property type="entry name" value="Somatostatin"/>
</dbReference>
<dbReference type="InterPro" id="IPR018142">
    <property type="entry name" value="Somatostatin/Cortistatin_C"/>
</dbReference>
<dbReference type="PANTHER" id="PTHR10558">
    <property type="entry name" value="SOMATOSTATIN"/>
    <property type="match status" value="1"/>
</dbReference>
<dbReference type="PANTHER" id="PTHR10558:SF6">
    <property type="entry name" value="SOMATOSTATIN 1, TANDEM DUPLICATE 2"/>
    <property type="match status" value="1"/>
</dbReference>
<dbReference type="Pfam" id="PF03002">
    <property type="entry name" value="Somatostatin"/>
    <property type="match status" value="1"/>
</dbReference>
<name>SMS2_PLAFE</name>
<evidence type="ECO:0000256" key="1">
    <source>
        <dbReference type="SAM" id="MobiDB-lite"/>
    </source>
</evidence>
<evidence type="ECO:0000269" key="2">
    <source>
    </source>
</evidence>
<evidence type="ECO:0000305" key="3"/>
<gene>
    <name type="primary">sst2</name>
</gene>
<reference key="1">
    <citation type="journal article" date="1987" name="Eur. J. Biochem.">
        <title>Structural characterization of peptides derived from prosomatostatins I and II isolated from the pancreatic islets of two species of teleostean fish: the daddy sculpin and the flounder.</title>
        <authorList>
            <person name="Conlon J.M."/>
            <person name="Davis M.S."/>
            <person name="Falkmer S."/>
            <person name="Thim L."/>
        </authorList>
    </citation>
    <scope>PROTEIN SEQUENCE</scope>
    <source>
        <tissue>Pancreas</tissue>
    </source>
</reference>
<protein>
    <recommendedName>
        <fullName>Somatostatin-2</fullName>
    </recommendedName>
    <alternativeName>
        <fullName>Somatostatin II</fullName>
    </alternativeName>
    <component>
        <recommendedName>
            <fullName>[Tyr21,Gly24]-somatostatin-28</fullName>
        </recommendedName>
    </component>
    <component>
        <recommendedName>
            <fullName>[Tyr7,Gly10]-somatostatin-14</fullName>
        </recommendedName>
    </component>
</protein>
<feature type="propeptide" id="PRO_0000045873">
    <location>
        <begin position="1" status="less than"/>
        <end position="45"/>
    </location>
</feature>
<feature type="peptide" id="PRO_0000033146" description="[Tyr21,Gly24]-somatostatin-28" evidence="2">
    <location>
        <begin position="46"/>
        <end position="73"/>
    </location>
</feature>
<feature type="peptide" id="PRO_0000033147" description="[Tyr7,Gly10]-somatostatin-14">
    <location>
        <begin position="60"/>
        <end position="73"/>
    </location>
</feature>
<feature type="region of interest" description="Disordered" evidence="1">
    <location>
        <begin position="23"/>
        <end position="58"/>
    </location>
</feature>
<feature type="disulfide bond">
    <location>
        <begin position="62"/>
        <end position="73"/>
    </location>
</feature>
<feature type="non-consecutive residues" evidence="3">
    <location>
        <begin position="10"/>
        <end position="11"/>
    </location>
</feature>
<feature type="non-consecutive residues" evidence="3">
    <location>
        <begin position="45"/>
        <end position="46"/>
    </location>
</feature>
<feature type="non-terminal residue">
    <location>
        <position position="1"/>
    </location>
</feature>
<keyword id="KW-0165">Cleavage on pair of basic residues</keyword>
<keyword id="KW-0903">Direct protein sequencing</keyword>
<keyword id="KW-1015">Disulfide bond</keyword>
<keyword id="KW-0372">Hormone</keyword>
<keyword id="KW-0964">Secreted</keyword>
<proteinExistence type="evidence at protein level"/>
<organism>
    <name type="scientific">Platichthys flesus</name>
    <name type="common">European flounder</name>
    <name type="synonym">Pleuronectes flesus</name>
    <dbReference type="NCBI Taxonomy" id="8260"/>
    <lineage>
        <taxon>Eukaryota</taxon>
        <taxon>Metazoa</taxon>
        <taxon>Chordata</taxon>
        <taxon>Craniata</taxon>
        <taxon>Vertebrata</taxon>
        <taxon>Euteleostomi</taxon>
        <taxon>Actinopterygii</taxon>
        <taxon>Neopterygii</taxon>
        <taxon>Teleostei</taxon>
        <taxon>Neoteleostei</taxon>
        <taxon>Acanthomorphata</taxon>
        <taxon>Carangaria</taxon>
        <taxon>Pleuronectiformes</taxon>
        <taxon>Pleuronectoidei</taxon>
        <taxon>Pleuronectidae</taxon>
        <taxon>Platichthys</taxon>
    </lineage>
</organism>